<proteinExistence type="inferred from homology"/>
<protein>
    <recommendedName>
        <fullName evidence="6">Probable diguanylate cyclase DgcF</fullName>
        <shortName evidence="6">DGC</shortName>
        <ecNumber evidence="1">2.7.7.65</ecNumber>
    </recommendedName>
</protein>
<accession>P76147</accession>
<accession>P77191</accession>
<comment type="function">
    <text evidence="1">Catalyzes the synthesis of cyclic-di-GMP (c-di-GMP) via the condensation of 2 GTP molecules.</text>
</comment>
<comment type="catalytic activity">
    <reaction evidence="1">
        <text>2 GTP = 3',3'-c-di-GMP + 2 diphosphate</text>
        <dbReference type="Rhea" id="RHEA:24898"/>
        <dbReference type="ChEBI" id="CHEBI:33019"/>
        <dbReference type="ChEBI" id="CHEBI:37565"/>
        <dbReference type="ChEBI" id="CHEBI:58805"/>
        <dbReference type="EC" id="2.7.7.65"/>
    </reaction>
</comment>
<comment type="cofactor">
    <cofactor evidence="1">
        <name>Mg(2+)</name>
        <dbReference type="ChEBI" id="CHEBI:18420"/>
    </cofactor>
    <text evidence="1">Binds 1 Mg(2+) ion per monomer.</text>
</comment>
<comment type="pathway">
    <text evidence="6">Purine metabolism; 3',5'-cyclic di-GMP biosynthesis.</text>
</comment>
<comment type="subunit">
    <text evidence="1">Homodimer.</text>
</comment>
<comment type="subcellular location">
    <subcellularLocation>
        <location evidence="6">Cell membrane</location>
        <topology evidence="2">Multi-pass membrane protein</topology>
    </subcellularLocation>
</comment>
<comment type="disruption phenotype">
    <text evidence="4">Deletion of the gene increases swimming motility.</text>
</comment>
<comment type="miscellaneous">
    <text evidence="7">The promoter and the first four transmembrane segments are deleted in E.coli K12.</text>
</comment>
<reference key="1">
    <citation type="journal article" date="1996" name="DNA Res.">
        <title>A 570-kb DNA sequence of the Escherichia coli K-12 genome corresponding to the 28.0-40.1 min region on the linkage map.</title>
        <authorList>
            <person name="Aiba H."/>
            <person name="Baba T."/>
            <person name="Fujita K."/>
            <person name="Hayashi K."/>
            <person name="Inada T."/>
            <person name="Isono K."/>
            <person name="Itoh T."/>
            <person name="Kasai H."/>
            <person name="Kashimoto K."/>
            <person name="Kimura S."/>
            <person name="Kitakawa M."/>
            <person name="Kitagawa M."/>
            <person name="Makino K."/>
            <person name="Miki T."/>
            <person name="Mizobuchi K."/>
            <person name="Mori H."/>
            <person name="Mori T."/>
            <person name="Motomura K."/>
            <person name="Nakade S."/>
            <person name="Nakamura Y."/>
            <person name="Nashimoto H."/>
            <person name="Nishio Y."/>
            <person name="Oshima T."/>
            <person name="Saito N."/>
            <person name="Sampei G."/>
            <person name="Seki Y."/>
            <person name="Sivasundaram S."/>
            <person name="Tagami H."/>
            <person name="Takeda J."/>
            <person name="Takemoto K."/>
            <person name="Takeuchi Y."/>
            <person name="Wada C."/>
            <person name="Yamamoto Y."/>
            <person name="Horiuchi T."/>
        </authorList>
    </citation>
    <scope>NUCLEOTIDE SEQUENCE [LARGE SCALE GENOMIC DNA]</scope>
    <source>
        <strain>K12 / W3110 / ATCC 27325 / DSM 5911</strain>
    </source>
</reference>
<reference key="2">
    <citation type="journal article" date="1997" name="Science">
        <title>The complete genome sequence of Escherichia coli K-12.</title>
        <authorList>
            <person name="Blattner F.R."/>
            <person name="Plunkett G. III"/>
            <person name="Bloch C.A."/>
            <person name="Perna N.T."/>
            <person name="Burland V."/>
            <person name="Riley M."/>
            <person name="Collado-Vides J."/>
            <person name="Glasner J.D."/>
            <person name="Rode C.K."/>
            <person name="Mayhew G.F."/>
            <person name="Gregor J."/>
            <person name="Davis N.W."/>
            <person name="Kirkpatrick H.A."/>
            <person name="Goeden M.A."/>
            <person name="Rose D.J."/>
            <person name="Mau B."/>
            <person name="Shao Y."/>
        </authorList>
    </citation>
    <scope>NUCLEOTIDE SEQUENCE [LARGE SCALE GENOMIC DNA]</scope>
    <source>
        <strain>K12 / MG1655 / ATCC 47076</strain>
    </source>
</reference>
<reference key="3">
    <citation type="journal article" date="2006" name="Mol. Syst. Biol.">
        <title>Highly accurate genome sequences of Escherichia coli K-12 strains MG1655 and W3110.</title>
        <authorList>
            <person name="Hayashi K."/>
            <person name="Morooka N."/>
            <person name="Yamamoto Y."/>
            <person name="Fujita K."/>
            <person name="Isono K."/>
            <person name="Choi S."/>
            <person name="Ohtsubo E."/>
            <person name="Baba T."/>
            <person name="Wanner B.L."/>
            <person name="Mori H."/>
            <person name="Horiuchi T."/>
        </authorList>
    </citation>
    <scope>NUCLEOTIDE SEQUENCE [LARGE SCALE GENOMIC DNA]</scope>
    <source>
        <strain>K12 / W3110 / ATCC 27325 / DSM 5911</strain>
    </source>
</reference>
<reference key="4">
    <citation type="journal article" date="2011" name="Appl. Microbiol. Biotechnol.">
        <title>GGDEF proteins YeaI, YedQ, and YfiN reduce early biofilm formation and swimming motility in Escherichia coli.</title>
        <authorList>
            <person name="Sanchez-Torres V."/>
            <person name="Hu H."/>
            <person name="Wood T.K."/>
        </authorList>
    </citation>
    <scope>DISRUPTION PHENOTYPE</scope>
</reference>
<reference key="5">
    <citation type="journal article" date="2015" name="J. Bacteriol.">
        <title>Systematic nomenclature for GGDEF and EAL domain-containing cyclic di-GMP turnover proteins of Escherichia coli.</title>
        <authorList>
            <person name="Hengge R."/>
            <person name="Galperin M.Y."/>
            <person name="Ghigo J.M."/>
            <person name="Gomelsky M."/>
            <person name="Green J."/>
            <person name="Hughes K.T."/>
            <person name="Jenal U."/>
            <person name="Landini P."/>
        </authorList>
    </citation>
    <scope>NOMENCLATURE</scope>
</reference>
<gene>
    <name evidence="5" type="primary">dgcF</name>
    <name type="synonym">yneF</name>
    <name type="ordered locus">b1522</name>
    <name type="ordered locus">JW5825</name>
</gene>
<name>DGCF_ECOLI</name>
<keyword id="KW-1003">Cell membrane</keyword>
<keyword id="KW-0342">GTP-binding</keyword>
<keyword id="KW-0460">Magnesium</keyword>
<keyword id="KW-0472">Membrane</keyword>
<keyword id="KW-0479">Metal-binding</keyword>
<keyword id="KW-0547">Nucleotide-binding</keyword>
<keyword id="KW-1185">Reference proteome</keyword>
<keyword id="KW-0808">Transferase</keyword>
<keyword id="KW-0812">Transmembrane</keyword>
<keyword id="KW-1133">Transmembrane helix</keyword>
<feature type="chain" id="PRO_0000201336" description="Probable diguanylate cyclase DgcF">
    <location>
        <begin position="1"/>
        <end position="315"/>
    </location>
</feature>
<feature type="transmembrane region" description="Helical" evidence="2">
    <location>
        <begin position="10"/>
        <end position="30"/>
    </location>
</feature>
<feature type="transmembrane region" description="Helical" evidence="2">
    <location>
        <begin position="41"/>
        <end position="61"/>
    </location>
</feature>
<feature type="transmembrane region" description="Helical" evidence="2">
    <location>
        <begin position="80"/>
        <end position="100"/>
    </location>
</feature>
<feature type="transmembrane region" description="Helical" evidence="2">
    <location>
        <begin position="116"/>
        <end position="136"/>
    </location>
</feature>
<feature type="domain" description="GGDEF" evidence="3">
    <location>
        <begin position="173"/>
        <end position="310"/>
    </location>
</feature>
<feature type="binding site" evidence="1">
    <location>
        <position position="181"/>
    </location>
    <ligand>
        <name>Mg(2+)</name>
        <dbReference type="ChEBI" id="CHEBI:18420"/>
    </ligand>
</feature>
<feature type="binding site" evidence="1">
    <location>
        <position position="182"/>
    </location>
    <ligand>
        <name>Mg(2+)</name>
        <dbReference type="ChEBI" id="CHEBI:18420"/>
    </ligand>
</feature>
<feature type="binding site" evidence="1">
    <location>
        <position position="189"/>
    </location>
    <ligand>
        <name>substrate</name>
    </ligand>
</feature>
<feature type="binding site" evidence="1">
    <location>
        <position position="194"/>
    </location>
    <ligand>
        <name>substrate</name>
    </ligand>
</feature>
<feature type="binding site" evidence="1">
    <location>
        <position position="198"/>
    </location>
    <ligand>
        <name>substrate</name>
    </ligand>
</feature>
<feature type="binding site" evidence="1">
    <location>
        <position position="224"/>
    </location>
    <ligand>
        <name>Mg(2+)</name>
        <dbReference type="ChEBI" id="CHEBI:18420"/>
    </ligand>
</feature>
<organism>
    <name type="scientific">Escherichia coli (strain K12)</name>
    <dbReference type="NCBI Taxonomy" id="83333"/>
    <lineage>
        <taxon>Bacteria</taxon>
        <taxon>Pseudomonadati</taxon>
        <taxon>Pseudomonadota</taxon>
        <taxon>Gammaproteobacteria</taxon>
        <taxon>Enterobacterales</taxon>
        <taxon>Enterobacteriaceae</taxon>
        <taxon>Escherichia</taxon>
    </lineage>
</organism>
<evidence type="ECO:0000250" key="1">
    <source>
        <dbReference type="UniProtKB" id="P31129"/>
    </source>
</evidence>
<evidence type="ECO:0000255" key="2"/>
<evidence type="ECO:0000255" key="3">
    <source>
        <dbReference type="PROSITE-ProRule" id="PRU00095"/>
    </source>
</evidence>
<evidence type="ECO:0000269" key="4">
    <source>
    </source>
</evidence>
<evidence type="ECO:0000303" key="5">
    <source>
    </source>
</evidence>
<evidence type="ECO:0000305" key="6"/>
<evidence type="ECO:0000305" key="7">
    <source>
    </source>
</evidence>
<dbReference type="EC" id="2.7.7.65" evidence="1"/>
<dbReference type="EMBL" id="U00096">
    <property type="protein sequence ID" value="AAC74595.1"/>
    <property type="molecule type" value="Genomic_DNA"/>
</dbReference>
<dbReference type="EMBL" id="AP009048">
    <property type="protein sequence ID" value="BAA15205.2"/>
    <property type="molecule type" value="Genomic_DNA"/>
</dbReference>
<dbReference type="PIR" id="E64906">
    <property type="entry name" value="E64906"/>
</dbReference>
<dbReference type="RefSeq" id="NP_416039.1">
    <property type="nucleotide sequence ID" value="NC_000913.3"/>
</dbReference>
<dbReference type="SMR" id="P76147"/>
<dbReference type="BioGRID" id="4260884">
    <property type="interactions" value="35"/>
</dbReference>
<dbReference type="DIP" id="DIP-47997N"/>
<dbReference type="FunCoup" id="P76147">
    <property type="interactions" value="48"/>
</dbReference>
<dbReference type="STRING" id="511145.b1522"/>
<dbReference type="PaxDb" id="511145-b1522"/>
<dbReference type="EnsemblBacteria" id="AAC74595">
    <property type="protein sequence ID" value="AAC74595"/>
    <property type="gene ID" value="b1522"/>
</dbReference>
<dbReference type="GeneID" id="947422"/>
<dbReference type="KEGG" id="ecj:JW5825"/>
<dbReference type="KEGG" id="eco:b1522"/>
<dbReference type="KEGG" id="ecoc:C3026_08800"/>
<dbReference type="PATRIC" id="fig|1411691.4.peg.744"/>
<dbReference type="EchoBASE" id="EB3575"/>
<dbReference type="eggNOG" id="COG2199">
    <property type="taxonomic scope" value="Bacteria"/>
</dbReference>
<dbReference type="HOGENOM" id="CLU_000445_11_27_6"/>
<dbReference type="InParanoid" id="P76147"/>
<dbReference type="OMA" id="WFEQSLR"/>
<dbReference type="OrthoDB" id="9812260at2"/>
<dbReference type="PhylomeDB" id="P76147"/>
<dbReference type="BioCyc" id="EcoCyc:G6808-MONOMER"/>
<dbReference type="UniPathway" id="UPA00599"/>
<dbReference type="PRO" id="PR:P76147"/>
<dbReference type="Proteomes" id="UP000000625">
    <property type="component" value="Chromosome"/>
</dbReference>
<dbReference type="GO" id="GO:0005886">
    <property type="term" value="C:plasma membrane"/>
    <property type="evidence" value="ECO:0000314"/>
    <property type="project" value="EcoCyc"/>
</dbReference>
<dbReference type="GO" id="GO:0052621">
    <property type="term" value="F:diguanylate cyclase activity"/>
    <property type="evidence" value="ECO:0000318"/>
    <property type="project" value="GO_Central"/>
</dbReference>
<dbReference type="GO" id="GO:0005525">
    <property type="term" value="F:GTP binding"/>
    <property type="evidence" value="ECO:0007669"/>
    <property type="project" value="UniProtKB-KW"/>
</dbReference>
<dbReference type="GO" id="GO:0046872">
    <property type="term" value="F:metal ion binding"/>
    <property type="evidence" value="ECO:0007669"/>
    <property type="project" value="UniProtKB-KW"/>
</dbReference>
<dbReference type="GO" id="GO:0043709">
    <property type="term" value="P:cell adhesion involved in single-species biofilm formation"/>
    <property type="evidence" value="ECO:0000318"/>
    <property type="project" value="GO_Central"/>
</dbReference>
<dbReference type="GO" id="GO:1902201">
    <property type="term" value="P:negative regulation of bacterial-type flagellum-dependent cell motility"/>
    <property type="evidence" value="ECO:0000318"/>
    <property type="project" value="GO_Central"/>
</dbReference>
<dbReference type="GO" id="GO:1902021">
    <property type="term" value="P:regulation of bacterial-type flagellum-dependent cell motility"/>
    <property type="evidence" value="ECO:0000315"/>
    <property type="project" value="EcoCyc"/>
</dbReference>
<dbReference type="CDD" id="cd01949">
    <property type="entry name" value="GGDEF"/>
    <property type="match status" value="1"/>
</dbReference>
<dbReference type="FunFam" id="3.30.70.270:FF:000034">
    <property type="entry name" value="Diguanylate cyclase domain protein"/>
    <property type="match status" value="1"/>
</dbReference>
<dbReference type="Gene3D" id="3.30.70.270">
    <property type="match status" value="1"/>
</dbReference>
<dbReference type="InterPro" id="IPR050469">
    <property type="entry name" value="Diguanylate_Cyclase"/>
</dbReference>
<dbReference type="InterPro" id="IPR000160">
    <property type="entry name" value="GGDEF_dom"/>
</dbReference>
<dbReference type="InterPro" id="IPR029787">
    <property type="entry name" value="Nucleotide_cyclase"/>
</dbReference>
<dbReference type="InterPro" id="IPR043128">
    <property type="entry name" value="Rev_trsase/Diguanyl_cyclase"/>
</dbReference>
<dbReference type="NCBIfam" id="TIGR00254">
    <property type="entry name" value="GGDEF"/>
    <property type="match status" value="1"/>
</dbReference>
<dbReference type="PANTHER" id="PTHR45138:SF9">
    <property type="entry name" value="DIGUANYLATE CYCLASE DGCM-RELATED"/>
    <property type="match status" value="1"/>
</dbReference>
<dbReference type="PANTHER" id="PTHR45138">
    <property type="entry name" value="REGULATORY COMPONENTS OF SENSORY TRANSDUCTION SYSTEM"/>
    <property type="match status" value="1"/>
</dbReference>
<dbReference type="Pfam" id="PF00990">
    <property type="entry name" value="GGDEF"/>
    <property type="match status" value="1"/>
</dbReference>
<dbReference type="SMART" id="SM00267">
    <property type="entry name" value="GGDEF"/>
    <property type="match status" value="1"/>
</dbReference>
<dbReference type="SUPFAM" id="SSF55073">
    <property type="entry name" value="Nucleotide cyclase"/>
    <property type="match status" value="1"/>
</dbReference>
<dbReference type="PROSITE" id="PS50887">
    <property type="entry name" value="GGDEF"/>
    <property type="match status" value="1"/>
</dbReference>
<sequence length="315" mass="34322">MLADWFSEQFSTGVLIVPCMLTLAIPGVLPRFKAEQMMPAIALIVSVIASVVIGGAGSLAFPLPALIWCAVRYTPQVTCLLTFVTGAVEIVLVANSVIDISVGSPFSIPQMFSARLGIATMAICPIMVSFSVAAINSLMKQVALRADFDFLTQVYSRSGLYEALKSPSLKQTQHLTVMLLDIDYFKSINDNYGHECGDKVLSVFARHIQKIVGDKGLVARMGGEEFAVAVPSVNPVDGLLMAEKIRKGVELQPFTWQQKTLYLTVSIGVGSGRASYLTLTDDFNKLMVEADTCLYRSKKDGRNRTSTMRYGEEVV</sequence>